<keyword id="KW-0238">DNA-binding</keyword>
<keyword id="KW-0539">Nucleus</keyword>
<keyword id="KW-1185">Reference proteome</keyword>
<keyword id="KW-0804">Transcription</keyword>
<keyword id="KW-0805">Transcription regulation</keyword>
<reference key="1">
    <citation type="journal article" date="1997" name="Dev. Biol.">
        <title>tbx6, a Brachyury-related gene expressed by ventral mesendodermal precursors in the zebrafish embryo.</title>
        <authorList>
            <person name="Hug B."/>
            <person name="Walter V."/>
            <person name="Grunwald D.J."/>
        </authorList>
    </citation>
    <scope>NUCLEOTIDE SEQUENCE [MRNA]</scope>
</reference>
<feature type="chain" id="PRO_0000184440" description="T-box transcription factor TBX6L">
    <location>
        <begin position="1"/>
        <end position="473"/>
    </location>
</feature>
<feature type="DNA-binding region" description="T-box" evidence="1">
    <location>
        <begin position="43"/>
        <end position="217"/>
    </location>
</feature>
<feature type="region of interest" description="Disordered" evidence="2">
    <location>
        <begin position="342"/>
        <end position="361"/>
    </location>
</feature>
<organism>
    <name type="scientific">Danio rerio</name>
    <name type="common">Zebrafish</name>
    <name type="synonym">Brachydanio rerio</name>
    <dbReference type="NCBI Taxonomy" id="7955"/>
    <lineage>
        <taxon>Eukaryota</taxon>
        <taxon>Metazoa</taxon>
        <taxon>Chordata</taxon>
        <taxon>Craniata</taxon>
        <taxon>Vertebrata</taxon>
        <taxon>Euteleostomi</taxon>
        <taxon>Actinopterygii</taxon>
        <taxon>Neopterygii</taxon>
        <taxon>Teleostei</taxon>
        <taxon>Ostariophysi</taxon>
        <taxon>Cypriniformes</taxon>
        <taxon>Danionidae</taxon>
        <taxon>Danioninae</taxon>
        <taxon>Danio</taxon>
    </lineage>
</organism>
<accession>P79742</accession>
<name>TBX6L_DANRE</name>
<comment type="function">
    <text>Probable transcriptional regulator involved in developmental processes.</text>
</comment>
<comment type="subcellular location">
    <subcellularLocation>
        <location evidence="1">Nucleus</location>
    </subcellularLocation>
</comment>
<comment type="tissue specificity">
    <text>Exclusively expressed by ventral mesendoderm.</text>
</comment>
<proteinExistence type="evidence at transcript level"/>
<gene>
    <name type="primary">tbx6l</name>
    <name type="synonym">tbx6</name>
</gene>
<dbReference type="EMBL" id="U80951">
    <property type="protein sequence ID" value="AAB39319.1"/>
    <property type="molecule type" value="mRNA"/>
</dbReference>
<dbReference type="SMR" id="P79742"/>
<dbReference type="STRING" id="7955.ENSDARP00000113982"/>
<dbReference type="PaxDb" id="7955-ENSDARP00000113982"/>
<dbReference type="AGR" id="ZFIN:ZDB-GENE-980526-171"/>
<dbReference type="ZFIN" id="ZDB-GENE-980526-171">
    <property type="gene designation" value="tbx16l"/>
</dbReference>
<dbReference type="eggNOG" id="KOG3585">
    <property type="taxonomic scope" value="Eukaryota"/>
</dbReference>
<dbReference type="InParanoid" id="P79742"/>
<dbReference type="PRO" id="PR:P79742"/>
<dbReference type="Proteomes" id="UP000000437">
    <property type="component" value="Unplaced"/>
</dbReference>
<dbReference type="GO" id="GO:0000785">
    <property type="term" value="C:chromatin"/>
    <property type="evidence" value="ECO:0000318"/>
    <property type="project" value="GO_Central"/>
</dbReference>
<dbReference type="GO" id="GO:0005634">
    <property type="term" value="C:nucleus"/>
    <property type="evidence" value="ECO:0000318"/>
    <property type="project" value="GO_Central"/>
</dbReference>
<dbReference type="GO" id="GO:0000981">
    <property type="term" value="F:DNA-binding transcription factor activity, RNA polymerase II-specific"/>
    <property type="evidence" value="ECO:0000318"/>
    <property type="project" value="GO_Central"/>
</dbReference>
<dbReference type="GO" id="GO:0000978">
    <property type="term" value="F:RNA polymerase II cis-regulatory region sequence-specific DNA binding"/>
    <property type="evidence" value="ECO:0000318"/>
    <property type="project" value="GO_Central"/>
</dbReference>
<dbReference type="GO" id="GO:0001708">
    <property type="term" value="P:cell fate specification"/>
    <property type="evidence" value="ECO:0000318"/>
    <property type="project" value="GO_Central"/>
</dbReference>
<dbReference type="GO" id="GO:0048341">
    <property type="term" value="P:paraxial mesoderm formation"/>
    <property type="evidence" value="ECO:0000316"/>
    <property type="project" value="ZFIN"/>
</dbReference>
<dbReference type="GO" id="GO:0045893">
    <property type="term" value="P:positive regulation of DNA-templated transcription"/>
    <property type="evidence" value="ECO:0007669"/>
    <property type="project" value="InterPro"/>
</dbReference>
<dbReference type="GO" id="GO:0006357">
    <property type="term" value="P:regulation of transcription by RNA polymerase II"/>
    <property type="evidence" value="ECO:0000318"/>
    <property type="project" value="GO_Central"/>
</dbReference>
<dbReference type="GO" id="GO:0061053">
    <property type="term" value="P:somite development"/>
    <property type="evidence" value="ECO:0000316"/>
    <property type="project" value="ZFIN"/>
</dbReference>
<dbReference type="FunFam" id="2.60.40.820:FF:000007">
    <property type="entry name" value="T-box transcription factor"/>
    <property type="match status" value="1"/>
</dbReference>
<dbReference type="Gene3D" id="2.60.40.820">
    <property type="entry name" value="Transcription factor, T-box"/>
    <property type="match status" value="1"/>
</dbReference>
<dbReference type="InterPro" id="IPR008967">
    <property type="entry name" value="p53-like_TF_DNA-bd_sf"/>
</dbReference>
<dbReference type="InterPro" id="IPR046360">
    <property type="entry name" value="T-box_DNA-bd"/>
</dbReference>
<dbReference type="InterPro" id="IPR036960">
    <property type="entry name" value="T-box_sf"/>
</dbReference>
<dbReference type="InterPro" id="IPR001699">
    <property type="entry name" value="TF_T-box"/>
</dbReference>
<dbReference type="InterPro" id="IPR018186">
    <property type="entry name" value="TF_T-box_CS"/>
</dbReference>
<dbReference type="PANTHER" id="PTHR11267">
    <property type="entry name" value="T-BOX PROTEIN-RELATED"/>
    <property type="match status" value="1"/>
</dbReference>
<dbReference type="PANTHER" id="PTHR11267:SF198">
    <property type="entry name" value="T-BOX TRANSCRIPTION FACTOR TBX6L"/>
    <property type="match status" value="1"/>
</dbReference>
<dbReference type="Pfam" id="PF00907">
    <property type="entry name" value="T-box"/>
    <property type="match status" value="1"/>
</dbReference>
<dbReference type="PRINTS" id="PR00937">
    <property type="entry name" value="TBOX"/>
</dbReference>
<dbReference type="SMART" id="SM00425">
    <property type="entry name" value="TBOX"/>
    <property type="match status" value="1"/>
</dbReference>
<dbReference type="SUPFAM" id="SSF49417">
    <property type="entry name" value="p53-like transcription factors"/>
    <property type="match status" value="1"/>
</dbReference>
<dbReference type="PROSITE" id="PS01283">
    <property type="entry name" value="TBOX_1"/>
    <property type="match status" value="1"/>
</dbReference>
<dbReference type="PROSITE" id="PS01264">
    <property type="entry name" value="TBOX_2"/>
    <property type="match status" value="1"/>
</dbReference>
<dbReference type="PROSITE" id="PS50252">
    <property type="entry name" value="TBOX_3"/>
    <property type="match status" value="1"/>
</dbReference>
<protein>
    <recommendedName>
        <fullName>T-box transcription factor TBX6L</fullName>
        <shortName>T-box protein 6L</shortName>
    </recommendedName>
    <alternativeName>
        <fullName>T-box transcription factor TBX6</fullName>
        <shortName>T-box protein 6</shortName>
    </alternativeName>
</protein>
<evidence type="ECO:0000255" key="1">
    <source>
        <dbReference type="PROSITE-ProRule" id="PRU00201"/>
    </source>
</evidence>
<evidence type="ECO:0000256" key="2">
    <source>
        <dbReference type="SAM" id="MobiDB-lite"/>
    </source>
</evidence>
<sequence length="473" mass="53477">MNHLANNYGYYPQDCRTQYSRMNSAEAELTSLPVHVSLQDRELWDKFSSIGTEMLITKSGRRMFPSCKVTVTGLNPKVKYVVIMDMVPFDNHKYKWNKDCWEVNGSSDPHLPNRFFIHPDSPAPGQKWMQYPISFHKLKLTNNTLNSNGLVVLHSMHKYQPRLHIVQSPDPCTPHNPGAYLRFTFPEAAFIAVTAYQNQEITKLKIDNNPFAKGFRDNGLNRKRFRDKGTQEMQDTDRQVKLDLTANECAAGMSQMVEDVDVSVSSSVDCRDTQNSSSVSLNPFISAFTNPSSAGGAAAHQTHTLLSLSNRHFSSPRESNLNSVCAALPVSQLSTGHTSFSRLNPQETHHNSRPKIQLQPPHPSLQCHDLDVRLPLPPKLSRVQLSESALRNLEMSPLSDCANPRPLTNILNRSCFRASTPSGKLLPNPPQPEQFLRGSEREIYPAVQEYTDQQFTLNSQTEHRPHMRPLTEY</sequence>